<gene>
    <name evidence="1" type="primary">rpsI</name>
    <name type="ordered locus">EUBREC_2993</name>
</gene>
<organism>
    <name type="scientific">Agathobacter rectalis (strain ATCC 33656 / DSM 3377 / JCM 17463 / KCTC 5835 / VPI 0990)</name>
    <name type="common">Eubacterium rectale</name>
    <dbReference type="NCBI Taxonomy" id="515619"/>
    <lineage>
        <taxon>Bacteria</taxon>
        <taxon>Bacillati</taxon>
        <taxon>Bacillota</taxon>
        <taxon>Clostridia</taxon>
        <taxon>Lachnospirales</taxon>
        <taxon>Lachnospiraceae</taxon>
        <taxon>Agathobacter</taxon>
    </lineage>
</organism>
<keyword id="KW-0687">Ribonucleoprotein</keyword>
<keyword id="KW-0689">Ribosomal protein</keyword>
<name>RS9_AGARV</name>
<accession>C4ZI84</accession>
<comment type="similarity">
    <text evidence="1">Belongs to the universal ribosomal protein uS9 family.</text>
</comment>
<reference key="1">
    <citation type="journal article" date="2009" name="Proc. Natl. Acad. Sci. U.S.A.">
        <title>Characterizing a model human gut microbiota composed of members of its two dominant bacterial phyla.</title>
        <authorList>
            <person name="Mahowald M.A."/>
            <person name="Rey F.E."/>
            <person name="Seedorf H."/>
            <person name="Turnbaugh P.J."/>
            <person name="Fulton R.S."/>
            <person name="Wollam A."/>
            <person name="Shah N."/>
            <person name="Wang C."/>
            <person name="Magrini V."/>
            <person name="Wilson R.K."/>
            <person name="Cantarel B.L."/>
            <person name="Coutinho P.M."/>
            <person name="Henrissat B."/>
            <person name="Crock L.W."/>
            <person name="Russell A."/>
            <person name="Verberkmoes N.C."/>
            <person name="Hettich R.L."/>
            <person name="Gordon J.I."/>
        </authorList>
    </citation>
    <scope>NUCLEOTIDE SEQUENCE [LARGE SCALE GENOMIC DNA]</scope>
    <source>
        <strain>ATCC 33656 / DSM 3377 / JCM 17463 / KCTC 5835 / LMG 30912 / VPI 0990</strain>
    </source>
</reference>
<evidence type="ECO:0000255" key="1">
    <source>
        <dbReference type="HAMAP-Rule" id="MF_00532"/>
    </source>
</evidence>
<evidence type="ECO:0000305" key="2"/>
<dbReference type="EMBL" id="CP001107">
    <property type="protein sequence ID" value="ACR76721.1"/>
    <property type="molecule type" value="Genomic_DNA"/>
</dbReference>
<dbReference type="RefSeq" id="WP_012743748.1">
    <property type="nucleotide sequence ID" value="NZ_CAXSYD010000001.1"/>
</dbReference>
<dbReference type="SMR" id="C4ZI84"/>
<dbReference type="STRING" id="515619.EUBREC_2993"/>
<dbReference type="PaxDb" id="515619-EUBREC_2993"/>
<dbReference type="GeneID" id="86989686"/>
<dbReference type="KEGG" id="ere:EUBREC_2993"/>
<dbReference type="HOGENOM" id="CLU_046483_2_1_9"/>
<dbReference type="Proteomes" id="UP000001477">
    <property type="component" value="Chromosome"/>
</dbReference>
<dbReference type="GO" id="GO:0022627">
    <property type="term" value="C:cytosolic small ribosomal subunit"/>
    <property type="evidence" value="ECO:0007669"/>
    <property type="project" value="TreeGrafter"/>
</dbReference>
<dbReference type="GO" id="GO:0003723">
    <property type="term" value="F:RNA binding"/>
    <property type="evidence" value="ECO:0007669"/>
    <property type="project" value="TreeGrafter"/>
</dbReference>
<dbReference type="GO" id="GO:0003735">
    <property type="term" value="F:structural constituent of ribosome"/>
    <property type="evidence" value="ECO:0007669"/>
    <property type="project" value="InterPro"/>
</dbReference>
<dbReference type="GO" id="GO:0006412">
    <property type="term" value="P:translation"/>
    <property type="evidence" value="ECO:0007669"/>
    <property type="project" value="UniProtKB-UniRule"/>
</dbReference>
<dbReference type="FunFam" id="3.30.230.10:FF:000001">
    <property type="entry name" value="30S ribosomal protein S9"/>
    <property type="match status" value="1"/>
</dbReference>
<dbReference type="Gene3D" id="3.30.230.10">
    <property type="match status" value="1"/>
</dbReference>
<dbReference type="HAMAP" id="MF_00532_B">
    <property type="entry name" value="Ribosomal_uS9_B"/>
    <property type="match status" value="1"/>
</dbReference>
<dbReference type="InterPro" id="IPR020568">
    <property type="entry name" value="Ribosomal_Su5_D2-typ_SF"/>
</dbReference>
<dbReference type="InterPro" id="IPR000754">
    <property type="entry name" value="Ribosomal_uS9"/>
</dbReference>
<dbReference type="InterPro" id="IPR023035">
    <property type="entry name" value="Ribosomal_uS9_bac/plastid"/>
</dbReference>
<dbReference type="InterPro" id="IPR020574">
    <property type="entry name" value="Ribosomal_uS9_CS"/>
</dbReference>
<dbReference type="InterPro" id="IPR014721">
    <property type="entry name" value="Ribsml_uS5_D2-typ_fold_subgr"/>
</dbReference>
<dbReference type="NCBIfam" id="NF001099">
    <property type="entry name" value="PRK00132.1"/>
    <property type="match status" value="1"/>
</dbReference>
<dbReference type="PANTHER" id="PTHR21569">
    <property type="entry name" value="RIBOSOMAL PROTEIN S9"/>
    <property type="match status" value="1"/>
</dbReference>
<dbReference type="PANTHER" id="PTHR21569:SF1">
    <property type="entry name" value="SMALL RIBOSOMAL SUBUNIT PROTEIN US9M"/>
    <property type="match status" value="1"/>
</dbReference>
<dbReference type="Pfam" id="PF00380">
    <property type="entry name" value="Ribosomal_S9"/>
    <property type="match status" value="1"/>
</dbReference>
<dbReference type="SUPFAM" id="SSF54211">
    <property type="entry name" value="Ribosomal protein S5 domain 2-like"/>
    <property type="match status" value="1"/>
</dbReference>
<dbReference type="PROSITE" id="PS00360">
    <property type="entry name" value="RIBOSOMAL_S9"/>
    <property type="match status" value="1"/>
</dbReference>
<sequence length="130" mass="14514">MATTKYYGTGRRKSSVARVYLVPGTGKITINKRDIDEYLGLETLKVVVRQPLVATETVDKFDVLVNVRGGGYTGQAGAIRHGIARALLQVDSEYRPVLKSAGFLTRDPRMKERKKYGLKAARRAPQFSKR</sequence>
<feature type="chain" id="PRO_1000211833" description="Small ribosomal subunit protein uS9">
    <location>
        <begin position="1"/>
        <end position="130"/>
    </location>
</feature>
<protein>
    <recommendedName>
        <fullName evidence="1">Small ribosomal subunit protein uS9</fullName>
    </recommendedName>
    <alternativeName>
        <fullName evidence="2">30S ribosomal protein S9</fullName>
    </alternativeName>
</protein>
<proteinExistence type="inferred from homology"/>